<sequence>MNVKEPAEEAAIQLRTERQRIEPEGEEQSEQPTDLRGLFPEEIAALLTPWGQPTFRGKQIFKWLQNRAVREVAEMTDLPQALRVRLGEAGWLKPLAPERHRVARDGTEKYLWRLADGELIESVLMPYRRAQTRDRVTVCLSTQAGCPLSCRFCATGRQGFRRNLTAAEIVGQVLDITHEKRKDDPDFKVTNLVFMGMGEPFLNYDNVRRAIGLFTHPEGQAIGQRRITVSTAGIVPGIDRFADEDWEVNLALSLHAADDKQRSEWMPVNDRFPLAQVLEACRRYWEKTRRRLSVEYALMAGVNDRLEDARRLASLFKGWPIHLNLIPVNAVAGIGVRRPEREPTERFLAELRRWGVDAVIREERGQDIEAACGQLRGAAKGEEEA</sequence>
<gene>
    <name evidence="1" type="primary">rlmN</name>
    <name type="ordered locus">Helmi_20670</name>
    <name type="ORF">HM1_2136</name>
</gene>
<protein>
    <recommendedName>
        <fullName evidence="1">Probable dual-specificity RNA methyltransferase RlmN</fullName>
        <ecNumber evidence="1">2.1.1.192</ecNumber>
    </recommendedName>
    <alternativeName>
        <fullName evidence="1">23S rRNA (adenine(2503)-C(2))-methyltransferase</fullName>
    </alternativeName>
    <alternativeName>
        <fullName evidence="1">23S rRNA m2A2503 methyltransferase</fullName>
    </alternativeName>
    <alternativeName>
        <fullName evidence="1">Ribosomal RNA large subunit methyltransferase N</fullName>
    </alternativeName>
    <alternativeName>
        <fullName evidence="1">tRNA (adenine(37)-C(2))-methyltransferase</fullName>
    </alternativeName>
    <alternativeName>
        <fullName evidence="1">tRNA m2A37 methyltransferase</fullName>
    </alternativeName>
</protein>
<organism>
    <name type="scientific">Heliobacterium modesticaldum (strain ATCC 51547 / Ice1)</name>
    <dbReference type="NCBI Taxonomy" id="498761"/>
    <lineage>
        <taxon>Bacteria</taxon>
        <taxon>Bacillati</taxon>
        <taxon>Bacillota</taxon>
        <taxon>Clostridia</taxon>
        <taxon>Eubacteriales</taxon>
        <taxon>Heliobacteriaceae</taxon>
        <taxon>Heliomicrobium</taxon>
    </lineage>
</organism>
<proteinExistence type="inferred from homology"/>
<comment type="function">
    <text evidence="1">Specifically methylates position 2 of adenine 2503 in 23S rRNA and position 2 of adenine 37 in tRNAs.</text>
</comment>
<comment type="catalytic activity">
    <reaction evidence="1">
        <text>adenosine(2503) in 23S rRNA + 2 reduced [2Fe-2S]-[ferredoxin] + 2 S-adenosyl-L-methionine = 2-methyladenosine(2503) in 23S rRNA + 5'-deoxyadenosine + L-methionine + 2 oxidized [2Fe-2S]-[ferredoxin] + S-adenosyl-L-homocysteine</text>
        <dbReference type="Rhea" id="RHEA:42916"/>
        <dbReference type="Rhea" id="RHEA-COMP:10000"/>
        <dbReference type="Rhea" id="RHEA-COMP:10001"/>
        <dbReference type="Rhea" id="RHEA-COMP:10152"/>
        <dbReference type="Rhea" id="RHEA-COMP:10282"/>
        <dbReference type="ChEBI" id="CHEBI:17319"/>
        <dbReference type="ChEBI" id="CHEBI:33737"/>
        <dbReference type="ChEBI" id="CHEBI:33738"/>
        <dbReference type="ChEBI" id="CHEBI:57844"/>
        <dbReference type="ChEBI" id="CHEBI:57856"/>
        <dbReference type="ChEBI" id="CHEBI:59789"/>
        <dbReference type="ChEBI" id="CHEBI:74411"/>
        <dbReference type="ChEBI" id="CHEBI:74497"/>
        <dbReference type="EC" id="2.1.1.192"/>
    </reaction>
</comment>
<comment type="catalytic activity">
    <reaction evidence="1">
        <text>adenosine(37) in tRNA + 2 reduced [2Fe-2S]-[ferredoxin] + 2 S-adenosyl-L-methionine = 2-methyladenosine(37) in tRNA + 5'-deoxyadenosine + L-methionine + 2 oxidized [2Fe-2S]-[ferredoxin] + S-adenosyl-L-homocysteine</text>
        <dbReference type="Rhea" id="RHEA:43332"/>
        <dbReference type="Rhea" id="RHEA-COMP:10000"/>
        <dbReference type="Rhea" id="RHEA-COMP:10001"/>
        <dbReference type="Rhea" id="RHEA-COMP:10162"/>
        <dbReference type="Rhea" id="RHEA-COMP:10485"/>
        <dbReference type="ChEBI" id="CHEBI:17319"/>
        <dbReference type="ChEBI" id="CHEBI:33737"/>
        <dbReference type="ChEBI" id="CHEBI:33738"/>
        <dbReference type="ChEBI" id="CHEBI:57844"/>
        <dbReference type="ChEBI" id="CHEBI:57856"/>
        <dbReference type="ChEBI" id="CHEBI:59789"/>
        <dbReference type="ChEBI" id="CHEBI:74411"/>
        <dbReference type="ChEBI" id="CHEBI:74497"/>
        <dbReference type="EC" id="2.1.1.192"/>
    </reaction>
</comment>
<comment type="cofactor">
    <cofactor evidence="1">
        <name>[4Fe-4S] cluster</name>
        <dbReference type="ChEBI" id="CHEBI:49883"/>
    </cofactor>
    <text evidence="1">Binds 1 [4Fe-4S] cluster. The cluster is coordinated with 3 cysteines and an exchangeable S-adenosyl-L-methionine.</text>
</comment>
<comment type="subcellular location">
    <subcellularLocation>
        <location evidence="1">Cytoplasm</location>
    </subcellularLocation>
</comment>
<comment type="miscellaneous">
    <text evidence="1">Reaction proceeds by a ping-pong mechanism involving intermediate methylation of a conserved cysteine residue.</text>
</comment>
<comment type="similarity">
    <text evidence="1">Belongs to the radical SAM superfamily. RlmN family.</text>
</comment>
<accession>B0TGT1</accession>
<dbReference type="EC" id="2.1.1.192" evidence="1"/>
<dbReference type="EMBL" id="CP000930">
    <property type="protein sequence ID" value="ABZ84692.1"/>
    <property type="molecule type" value="Genomic_DNA"/>
</dbReference>
<dbReference type="SMR" id="B0TGT1"/>
<dbReference type="STRING" id="498761.HM1_2136"/>
<dbReference type="KEGG" id="hmo:HM1_2136"/>
<dbReference type="eggNOG" id="COG0820">
    <property type="taxonomic scope" value="Bacteria"/>
</dbReference>
<dbReference type="HOGENOM" id="CLU_029101_2_0_9"/>
<dbReference type="Proteomes" id="UP000008550">
    <property type="component" value="Chromosome"/>
</dbReference>
<dbReference type="GO" id="GO:0005737">
    <property type="term" value="C:cytoplasm"/>
    <property type="evidence" value="ECO:0007669"/>
    <property type="project" value="UniProtKB-SubCell"/>
</dbReference>
<dbReference type="GO" id="GO:0051539">
    <property type="term" value="F:4 iron, 4 sulfur cluster binding"/>
    <property type="evidence" value="ECO:0007669"/>
    <property type="project" value="UniProtKB-UniRule"/>
</dbReference>
<dbReference type="GO" id="GO:0046872">
    <property type="term" value="F:metal ion binding"/>
    <property type="evidence" value="ECO:0007669"/>
    <property type="project" value="UniProtKB-KW"/>
</dbReference>
<dbReference type="GO" id="GO:0070040">
    <property type="term" value="F:rRNA (adenine(2503)-C2-)-methyltransferase activity"/>
    <property type="evidence" value="ECO:0007669"/>
    <property type="project" value="UniProtKB-UniRule"/>
</dbReference>
<dbReference type="GO" id="GO:0019843">
    <property type="term" value="F:rRNA binding"/>
    <property type="evidence" value="ECO:0007669"/>
    <property type="project" value="UniProtKB-UniRule"/>
</dbReference>
<dbReference type="GO" id="GO:0002935">
    <property type="term" value="F:tRNA (adenine(37)-C2)-methyltransferase activity"/>
    <property type="evidence" value="ECO:0007669"/>
    <property type="project" value="UniProtKB-UniRule"/>
</dbReference>
<dbReference type="GO" id="GO:0000049">
    <property type="term" value="F:tRNA binding"/>
    <property type="evidence" value="ECO:0007669"/>
    <property type="project" value="UniProtKB-UniRule"/>
</dbReference>
<dbReference type="GO" id="GO:0070475">
    <property type="term" value="P:rRNA base methylation"/>
    <property type="evidence" value="ECO:0007669"/>
    <property type="project" value="UniProtKB-UniRule"/>
</dbReference>
<dbReference type="GO" id="GO:0030488">
    <property type="term" value="P:tRNA methylation"/>
    <property type="evidence" value="ECO:0007669"/>
    <property type="project" value="UniProtKB-UniRule"/>
</dbReference>
<dbReference type="CDD" id="cd01335">
    <property type="entry name" value="Radical_SAM"/>
    <property type="match status" value="1"/>
</dbReference>
<dbReference type="FunFam" id="3.20.20.70:FF:000014">
    <property type="entry name" value="Probable dual-specificity RNA methyltransferase RlmN"/>
    <property type="match status" value="1"/>
</dbReference>
<dbReference type="Gene3D" id="1.10.150.530">
    <property type="match status" value="1"/>
</dbReference>
<dbReference type="Gene3D" id="3.20.20.70">
    <property type="entry name" value="Aldolase class I"/>
    <property type="match status" value="1"/>
</dbReference>
<dbReference type="HAMAP" id="MF_01849">
    <property type="entry name" value="RNA_methyltr_RlmN"/>
    <property type="match status" value="1"/>
</dbReference>
<dbReference type="InterPro" id="IPR013785">
    <property type="entry name" value="Aldolase_TIM"/>
</dbReference>
<dbReference type="InterPro" id="IPR040072">
    <property type="entry name" value="Methyltransferase_A"/>
</dbReference>
<dbReference type="InterPro" id="IPR048641">
    <property type="entry name" value="RlmN_N"/>
</dbReference>
<dbReference type="InterPro" id="IPR027492">
    <property type="entry name" value="RNA_MTrfase_RlmN"/>
</dbReference>
<dbReference type="InterPro" id="IPR004383">
    <property type="entry name" value="rRNA_lsu_MTrfase_RlmN/Cfr"/>
</dbReference>
<dbReference type="InterPro" id="IPR007197">
    <property type="entry name" value="rSAM"/>
</dbReference>
<dbReference type="NCBIfam" id="TIGR00048">
    <property type="entry name" value="rRNA_mod_RlmN"/>
    <property type="match status" value="1"/>
</dbReference>
<dbReference type="PANTHER" id="PTHR30544">
    <property type="entry name" value="23S RRNA METHYLTRANSFERASE"/>
    <property type="match status" value="1"/>
</dbReference>
<dbReference type="PANTHER" id="PTHR30544:SF5">
    <property type="entry name" value="RADICAL SAM CORE DOMAIN-CONTAINING PROTEIN"/>
    <property type="match status" value="1"/>
</dbReference>
<dbReference type="Pfam" id="PF04055">
    <property type="entry name" value="Radical_SAM"/>
    <property type="match status" value="1"/>
</dbReference>
<dbReference type="Pfam" id="PF21016">
    <property type="entry name" value="RlmN_N"/>
    <property type="match status" value="1"/>
</dbReference>
<dbReference type="PIRSF" id="PIRSF006004">
    <property type="entry name" value="CHP00048"/>
    <property type="match status" value="1"/>
</dbReference>
<dbReference type="SFLD" id="SFLDF00275">
    <property type="entry name" value="adenosine_C2_methyltransferase"/>
    <property type="match status" value="1"/>
</dbReference>
<dbReference type="SFLD" id="SFLDG01062">
    <property type="entry name" value="methyltransferase_(Class_A)"/>
    <property type="match status" value="1"/>
</dbReference>
<dbReference type="SUPFAM" id="SSF102114">
    <property type="entry name" value="Radical SAM enzymes"/>
    <property type="match status" value="1"/>
</dbReference>
<dbReference type="PROSITE" id="PS51918">
    <property type="entry name" value="RADICAL_SAM"/>
    <property type="match status" value="1"/>
</dbReference>
<keyword id="KW-0004">4Fe-4S</keyword>
<keyword id="KW-0963">Cytoplasm</keyword>
<keyword id="KW-1015">Disulfide bond</keyword>
<keyword id="KW-0408">Iron</keyword>
<keyword id="KW-0411">Iron-sulfur</keyword>
<keyword id="KW-0479">Metal-binding</keyword>
<keyword id="KW-0489">Methyltransferase</keyword>
<keyword id="KW-1185">Reference proteome</keyword>
<keyword id="KW-0698">rRNA processing</keyword>
<keyword id="KW-0949">S-adenosyl-L-methionine</keyword>
<keyword id="KW-0808">Transferase</keyword>
<keyword id="KW-0819">tRNA processing</keyword>
<name>RLMN_HELMI</name>
<evidence type="ECO:0000255" key="1">
    <source>
        <dbReference type="HAMAP-Rule" id="MF_01849"/>
    </source>
</evidence>
<evidence type="ECO:0000255" key="2">
    <source>
        <dbReference type="PROSITE-ProRule" id="PRU01266"/>
    </source>
</evidence>
<evidence type="ECO:0000256" key="3">
    <source>
        <dbReference type="SAM" id="MobiDB-lite"/>
    </source>
</evidence>
<feature type="chain" id="PRO_0000350212" description="Probable dual-specificity RNA methyltransferase RlmN">
    <location>
        <begin position="1"/>
        <end position="385"/>
    </location>
</feature>
<feature type="domain" description="Radical SAM core" evidence="2">
    <location>
        <begin position="132"/>
        <end position="367"/>
    </location>
</feature>
<feature type="region of interest" description="Disordered" evidence="3">
    <location>
        <begin position="1"/>
        <end position="35"/>
    </location>
</feature>
<feature type="active site" description="Proton acceptor" evidence="1">
    <location>
        <position position="121"/>
    </location>
</feature>
<feature type="active site" description="S-methylcysteine intermediate" evidence="1">
    <location>
        <position position="372"/>
    </location>
</feature>
<feature type="binding site" evidence="1">
    <location>
        <position position="146"/>
    </location>
    <ligand>
        <name>[4Fe-4S] cluster</name>
        <dbReference type="ChEBI" id="CHEBI:49883"/>
        <note>4Fe-4S-S-AdoMet</note>
    </ligand>
</feature>
<feature type="binding site" evidence="1">
    <location>
        <position position="150"/>
    </location>
    <ligand>
        <name>[4Fe-4S] cluster</name>
        <dbReference type="ChEBI" id="CHEBI:49883"/>
        <note>4Fe-4S-S-AdoMet</note>
    </ligand>
</feature>
<feature type="binding site" evidence="1">
    <location>
        <position position="153"/>
    </location>
    <ligand>
        <name>[4Fe-4S] cluster</name>
        <dbReference type="ChEBI" id="CHEBI:49883"/>
        <note>4Fe-4S-S-AdoMet</note>
    </ligand>
</feature>
<feature type="binding site" evidence="1">
    <location>
        <begin position="198"/>
        <end position="199"/>
    </location>
    <ligand>
        <name>S-adenosyl-L-methionine</name>
        <dbReference type="ChEBI" id="CHEBI:59789"/>
    </ligand>
</feature>
<feature type="binding site" evidence="1">
    <location>
        <position position="230"/>
    </location>
    <ligand>
        <name>S-adenosyl-L-methionine</name>
        <dbReference type="ChEBI" id="CHEBI:59789"/>
    </ligand>
</feature>
<feature type="binding site" evidence="1">
    <location>
        <begin position="253"/>
        <end position="255"/>
    </location>
    <ligand>
        <name>S-adenosyl-L-methionine</name>
        <dbReference type="ChEBI" id="CHEBI:59789"/>
    </ligand>
</feature>
<feature type="binding site" evidence="1">
    <location>
        <position position="329"/>
    </location>
    <ligand>
        <name>S-adenosyl-L-methionine</name>
        <dbReference type="ChEBI" id="CHEBI:59789"/>
    </ligand>
</feature>
<feature type="disulfide bond" description="(transient)" evidence="1">
    <location>
        <begin position="139"/>
        <end position="372"/>
    </location>
</feature>
<reference key="1">
    <citation type="journal article" date="2008" name="J. Bacteriol.">
        <title>The genome of Heliobacterium modesticaldum, a phototrophic representative of the Firmicutes containing the simplest photosynthetic apparatus.</title>
        <authorList>
            <person name="Sattley W.M."/>
            <person name="Madigan M.T."/>
            <person name="Swingley W.D."/>
            <person name="Cheung P.C."/>
            <person name="Clocksin K.M."/>
            <person name="Conrad A.L."/>
            <person name="Dejesa L.C."/>
            <person name="Honchak B.M."/>
            <person name="Jung D.O."/>
            <person name="Karbach L.E."/>
            <person name="Kurdoglu A."/>
            <person name="Lahiri S."/>
            <person name="Mastrian S.D."/>
            <person name="Page L.E."/>
            <person name="Taylor H.L."/>
            <person name="Wang Z.T."/>
            <person name="Raymond J."/>
            <person name="Chen M."/>
            <person name="Blankenship R.E."/>
            <person name="Touchman J.W."/>
        </authorList>
    </citation>
    <scope>NUCLEOTIDE SEQUENCE [LARGE SCALE GENOMIC DNA]</scope>
    <source>
        <strain>ATCC 51547 / Ice1</strain>
    </source>
</reference>